<dbReference type="EC" id="3.6.4.13"/>
<dbReference type="EMBL" id="CH476608">
    <property type="protein sequence ID" value="EAU29877.1"/>
    <property type="status" value="ALT_SEQ"/>
    <property type="molecule type" value="Genomic_DNA"/>
</dbReference>
<dbReference type="RefSeq" id="XP_001218308.1">
    <property type="nucleotide sequence ID" value="XM_001218307.1"/>
</dbReference>
<dbReference type="SMR" id="Q0C9E8"/>
<dbReference type="STRING" id="341663.Q0C9E8"/>
<dbReference type="GeneID" id="4354373"/>
<dbReference type="eggNOG" id="KOG0335">
    <property type="taxonomic scope" value="Eukaryota"/>
</dbReference>
<dbReference type="OrthoDB" id="10256233at2759"/>
<dbReference type="Proteomes" id="UP000007963">
    <property type="component" value="Unassembled WGS sequence"/>
</dbReference>
<dbReference type="GO" id="GO:0005739">
    <property type="term" value="C:mitochondrion"/>
    <property type="evidence" value="ECO:0007669"/>
    <property type="project" value="UniProtKB-SubCell"/>
</dbReference>
<dbReference type="GO" id="GO:0005524">
    <property type="term" value="F:ATP binding"/>
    <property type="evidence" value="ECO:0007669"/>
    <property type="project" value="UniProtKB-KW"/>
</dbReference>
<dbReference type="GO" id="GO:0016887">
    <property type="term" value="F:ATP hydrolysis activity"/>
    <property type="evidence" value="ECO:0007669"/>
    <property type="project" value="RHEA"/>
</dbReference>
<dbReference type="GO" id="GO:0003723">
    <property type="term" value="F:RNA binding"/>
    <property type="evidence" value="ECO:0007669"/>
    <property type="project" value="UniProtKB-KW"/>
</dbReference>
<dbReference type="GO" id="GO:0003724">
    <property type="term" value="F:RNA helicase activity"/>
    <property type="evidence" value="ECO:0007669"/>
    <property type="project" value="UniProtKB-EC"/>
</dbReference>
<dbReference type="CDD" id="cd18787">
    <property type="entry name" value="SF2_C_DEAD"/>
    <property type="match status" value="1"/>
</dbReference>
<dbReference type="Gene3D" id="3.40.50.300">
    <property type="entry name" value="P-loop containing nucleotide triphosphate hydrolases"/>
    <property type="match status" value="2"/>
</dbReference>
<dbReference type="InterPro" id="IPR011545">
    <property type="entry name" value="DEAD/DEAH_box_helicase_dom"/>
</dbReference>
<dbReference type="InterPro" id="IPR014001">
    <property type="entry name" value="Helicase_ATP-bd"/>
</dbReference>
<dbReference type="InterPro" id="IPR001650">
    <property type="entry name" value="Helicase_C-like"/>
</dbReference>
<dbReference type="InterPro" id="IPR027417">
    <property type="entry name" value="P-loop_NTPase"/>
</dbReference>
<dbReference type="PANTHER" id="PTHR47960">
    <property type="entry name" value="DEAD-BOX ATP-DEPENDENT RNA HELICASE 50"/>
    <property type="match status" value="1"/>
</dbReference>
<dbReference type="Pfam" id="PF00270">
    <property type="entry name" value="DEAD"/>
    <property type="match status" value="1"/>
</dbReference>
<dbReference type="Pfam" id="PF00271">
    <property type="entry name" value="Helicase_C"/>
    <property type="match status" value="1"/>
</dbReference>
<dbReference type="SMART" id="SM00487">
    <property type="entry name" value="DEXDc"/>
    <property type="match status" value="1"/>
</dbReference>
<dbReference type="SMART" id="SM00490">
    <property type="entry name" value="HELICc"/>
    <property type="match status" value="1"/>
</dbReference>
<dbReference type="SUPFAM" id="SSF52540">
    <property type="entry name" value="P-loop containing nucleoside triphosphate hydrolases"/>
    <property type="match status" value="1"/>
</dbReference>
<dbReference type="PROSITE" id="PS51192">
    <property type="entry name" value="HELICASE_ATP_BIND_1"/>
    <property type="match status" value="1"/>
</dbReference>
<dbReference type="PROSITE" id="PS51194">
    <property type="entry name" value="HELICASE_CTER"/>
    <property type="match status" value="1"/>
</dbReference>
<dbReference type="PROSITE" id="PS51195">
    <property type="entry name" value="Q_MOTIF"/>
    <property type="match status" value="1"/>
</dbReference>
<organism>
    <name type="scientific">Aspergillus terreus (strain NIH 2624 / FGSC A1156)</name>
    <dbReference type="NCBI Taxonomy" id="341663"/>
    <lineage>
        <taxon>Eukaryota</taxon>
        <taxon>Fungi</taxon>
        <taxon>Dikarya</taxon>
        <taxon>Ascomycota</taxon>
        <taxon>Pezizomycotina</taxon>
        <taxon>Eurotiomycetes</taxon>
        <taxon>Eurotiomycetidae</taxon>
        <taxon>Eurotiales</taxon>
        <taxon>Aspergillaceae</taxon>
        <taxon>Aspergillus</taxon>
        <taxon>Aspergillus subgen. Circumdati</taxon>
    </lineage>
</organism>
<protein>
    <recommendedName>
        <fullName>ATP-dependent RNA helicase mrh4, mitochondrial</fullName>
        <ecNumber>3.6.4.13</ecNumber>
    </recommendedName>
</protein>
<gene>
    <name type="primary">mrh4</name>
    <name type="ORF">ATEG_09686</name>
</gene>
<evidence type="ECO:0000250" key="1"/>
<evidence type="ECO:0000255" key="2"/>
<evidence type="ECO:0000255" key="3">
    <source>
        <dbReference type="PROSITE-ProRule" id="PRU00541"/>
    </source>
</evidence>
<evidence type="ECO:0000255" key="4">
    <source>
        <dbReference type="PROSITE-ProRule" id="PRU00542"/>
    </source>
</evidence>
<evidence type="ECO:0000256" key="5">
    <source>
        <dbReference type="SAM" id="MobiDB-lite"/>
    </source>
</evidence>
<evidence type="ECO:0000305" key="6"/>
<reference key="1">
    <citation type="submission" date="2005-09" db="EMBL/GenBank/DDBJ databases">
        <title>Annotation of the Aspergillus terreus NIH2624 genome.</title>
        <authorList>
            <person name="Birren B.W."/>
            <person name="Lander E.S."/>
            <person name="Galagan J.E."/>
            <person name="Nusbaum C."/>
            <person name="Devon K."/>
            <person name="Henn M."/>
            <person name="Ma L.-J."/>
            <person name="Jaffe D.B."/>
            <person name="Butler J."/>
            <person name="Alvarez P."/>
            <person name="Gnerre S."/>
            <person name="Grabherr M."/>
            <person name="Kleber M."/>
            <person name="Mauceli E.W."/>
            <person name="Brockman W."/>
            <person name="Rounsley S."/>
            <person name="Young S.K."/>
            <person name="LaButti K."/>
            <person name="Pushparaj V."/>
            <person name="DeCaprio D."/>
            <person name="Crawford M."/>
            <person name="Koehrsen M."/>
            <person name="Engels R."/>
            <person name="Montgomery P."/>
            <person name="Pearson M."/>
            <person name="Howarth C."/>
            <person name="Larson L."/>
            <person name="Luoma S."/>
            <person name="White J."/>
            <person name="Alvarado L."/>
            <person name="Kodira C.D."/>
            <person name="Zeng Q."/>
            <person name="Oleary S."/>
            <person name="Yandava C."/>
            <person name="Denning D.W."/>
            <person name="Nierman W.C."/>
            <person name="Milne T."/>
            <person name="Madden K."/>
        </authorList>
    </citation>
    <scope>NUCLEOTIDE SEQUENCE [LARGE SCALE GENOMIC DNA]</scope>
    <source>
        <strain>NIH 2624 / FGSC A1156</strain>
    </source>
</reference>
<comment type="function">
    <text evidence="1">ATP-binding RNA helicase involved in mitochondrial RNA metabolism. Required for maintenance of mitochondrial DNA (By similarity).</text>
</comment>
<comment type="catalytic activity">
    <reaction>
        <text>ATP + H2O = ADP + phosphate + H(+)</text>
        <dbReference type="Rhea" id="RHEA:13065"/>
        <dbReference type="ChEBI" id="CHEBI:15377"/>
        <dbReference type="ChEBI" id="CHEBI:15378"/>
        <dbReference type="ChEBI" id="CHEBI:30616"/>
        <dbReference type="ChEBI" id="CHEBI:43474"/>
        <dbReference type="ChEBI" id="CHEBI:456216"/>
        <dbReference type="EC" id="3.6.4.13"/>
    </reaction>
</comment>
<comment type="subcellular location">
    <subcellularLocation>
        <location evidence="1">Mitochondrion</location>
    </subcellularLocation>
</comment>
<comment type="domain">
    <text>The Q motif is unique to and characteristic of the DEAD box family of RNA helicases and controls ATP binding and hydrolysis.</text>
</comment>
<comment type="similarity">
    <text evidence="6">Belongs to the DEAD box helicase family. MRH4 subfamily.</text>
</comment>
<comment type="sequence caution" evidence="6">
    <conflict type="erroneous gene model prediction">
        <sequence resource="EMBL-CDS" id="EAU29877"/>
    </conflict>
</comment>
<keyword id="KW-0067">ATP-binding</keyword>
<keyword id="KW-0347">Helicase</keyword>
<keyword id="KW-0378">Hydrolase</keyword>
<keyword id="KW-0496">Mitochondrion</keyword>
<keyword id="KW-0547">Nucleotide-binding</keyword>
<keyword id="KW-1185">Reference proteome</keyword>
<keyword id="KW-0694">RNA-binding</keyword>
<keyword id="KW-0809">Transit peptide</keyword>
<accession>Q0C9E8</accession>
<name>MRH4_ASPTN</name>
<feature type="transit peptide" description="Mitochondrion" evidence="2">
    <location>
        <begin position="1"/>
        <end position="39"/>
    </location>
</feature>
<feature type="chain" id="PRO_0000282710" description="ATP-dependent RNA helicase mrh4, mitochondrial">
    <location>
        <begin position="40"/>
        <end position="631"/>
    </location>
</feature>
<feature type="domain" description="Helicase ATP-binding" evidence="3">
    <location>
        <begin position="196"/>
        <end position="408"/>
    </location>
</feature>
<feature type="domain" description="Helicase C-terminal" evidence="4">
    <location>
        <begin position="442"/>
        <end position="631"/>
    </location>
</feature>
<feature type="region of interest" description="Disordered" evidence="5">
    <location>
        <begin position="55"/>
        <end position="111"/>
    </location>
</feature>
<feature type="region of interest" description="Disordered" evidence="5">
    <location>
        <begin position="181"/>
        <end position="200"/>
    </location>
</feature>
<feature type="short sequence motif" description="Q motif">
    <location>
        <begin position="143"/>
        <end position="176"/>
    </location>
</feature>
<feature type="short sequence motif" description="DEAD box">
    <location>
        <begin position="355"/>
        <end position="358"/>
    </location>
</feature>
<feature type="compositionally biased region" description="Basic and acidic residues" evidence="5">
    <location>
        <begin position="102"/>
        <end position="111"/>
    </location>
</feature>
<feature type="binding site" evidence="3">
    <location>
        <begin position="209"/>
        <end position="216"/>
    </location>
    <ligand>
        <name>ATP</name>
        <dbReference type="ChEBI" id="CHEBI:30616"/>
    </ligand>
</feature>
<proteinExistence type="inferred from homology"/>
<sequence>MYPLGRVSLPVRSPVCLFCQNRTSSLLPSAYVWQSARTMASGRLRRKAARMALSPNVAKTSLKKKRNDTDRFGPFAGMNQTEARIRDDPRSRSPASLKRSKAPSDESGRKDSELYKALKMQTALAPIPYGRRSAIKAKIAEITSFDQFPLLPVVRHSIFSQALPGLHDVTPTPIQRVAIPRLLDDTNKDKKPKKRAEGEPEYDQYLLAAETGSGKTLAYLIPLVNTVKQQEAIEKEEQKREEEEKAKEREEKLKNQAFDVEPELPPLSNAGRPRVIILVPTAELVAQVGAKVKTLSHTIKYRSGMISSNLTPRRIKNTLFNPDGIDILVTTPHLLASIAKTEPYVLSRVSHLVLDEADSLLDRSFQPITTEIIEKTSGSLQKLILCSATIPRSLDNFLRKKYPDIQRLTTPNLHAIPRRVQLGVVDIQKDPYRGNRNLACADVIWSIGKAGDSEPAGPFASYQGPSVKKILVFVNEREEADEVAQFLRSKGIDAHSLSRDSSARRQEEILAEFTEAGAPPSSEEIMLAQKKGRQDDAIPFEAPSKPHEPHKLPNTKVLVTTDIASRGIDTLAVKTVILYHVPHTTIDFIHRLGRLGRMNKRGRGIVLVGKKDRKDVVKEVREGMFRGQALI</sequence>